<evidence type="ECO:0000255" key="1"/>
<evidence type="ECO:0000255" key="2">
    <source>
        <dbReference type="PROSITE-ProRule" id="PRU00495"/>
    </source>
</evidence>
<evidence type="ECO:0000269" key="3">
    <source>
    </source>
</evidence>
<evidence type="ECO:0000269" key="4">
    <source>
    </source>
</evidence>
<evidence type="ECO:0000269" key="5">
    <source>
    </source>
</evidence>
<evidence type="ECO:0000269" key="6">
    <source>
    </source>
</evidence>
<evidence type="ECO:0000303" key="7">
    <source>
    </source>
</evidence>
<evidence type="ECO:0000303" key="8">
    <source>
    </source>
</evidence>
<evidence type="ECO:0000305" key="9"/>
<evidence type="ECO:0000305" key="10">
    <source>
    </source>
</evidence>
<evidence type="ECO:0000305" key="11">
    <source>
    </source>
</evidence>
<evidence type="ECO:0000312" key="12">
    <source>
        <dbReference type="EMBL" id="AAK09266.1"/>
    </source>
</evidence>
<feature type="chain" id="PRO_0000431675" description="Protein RESISTANCE TO POWDERY MILDEW 8.1">
    <location>
        <begin position="1"/>
        <end position="148"/>
    </location>
</feature>
<feature type="transmembrane region" description="Helical" evidence="1">
    <location>
        <begin position="7"/>
        <end position="23"/>
    </location>
</feature>
<feature type="domain" description="RPW8" evidence="2">
    <location>
        <begin position="1"/>
        <end position="148"/>
    </location>
</feature>
<feature type="coiled-coil region" evidence="1">
    <location>
        <begin position="120"/>
        <end position="140"/>
    </location>
</feature>
<sequence>MPIGELAIGAVLGVGAQAIYDRFRKARDISFVHRLCATILSIEPFLVQIDKRSKVEGSPLREVNERLTCFLELAYVFVEAYPKLRRRQVLRKYRYIKAIETIELALRSIIVVDFQVDQWDDIKEIKAKISEMDTKLAEVISACSKIRA</sequence>
<accession>Q9C5Z7</accession>
<dbReference type="EMBL" id="AF273059">
    <property type="protein sequence ID" value="AAK09266.1"/>
    <property type="molecule type" value="Genomic_DNA"/>
</dbReference>
<dbReference type="EMBL" id="FJ267636">
    <property type="protein sequence ID" value="ACJ05898.1"/>
    <property type="molecule type" value="Genomic_DNA"/>
</dbReference>
<dbReference type="EMBL" id="FJ267637">
    <property type="protein sequence ID" value="ACJ05899.1"/>
    <property type="molecule type" value="Genomic_DNA"/>
</dbReference>
<dbReference type="SMR" id="Q9C5Z7"/>
<dbReference type="OrthoDB" id="2016095at2759"/>
<dbReference type="ExpressionAtlas" id="Q9C5Z7">
    <property type="expression patterns" value="baseline and differential"/>
</dbReference>
<dbReference type="GO" id="GO:0016020">
    <property type="term" value="C:membrane"/>
    <property type="evidence" value="ECO:0007669"/>
    <property type="project" value="UniProtKB-SubCell"/>
</dbReference>
<dbReference type="GO" id="GO:0050832">
    <property type="term" value="P:defense response to fungus"/>
    <property type="evidence" value="ECO:0000314"/>
    <property type="project" value="UniProtKB"/>
</dbReference>
<dbReference type="GO" id="GO:0045087">
    <property type="term" value="P:innate immune response"/>
    <property type="evidence" value="ECO:0000314"/>
    <property type="project" value="UniProtKB"/>
</dbReference>
<dbReference type="GO" id="GO:0009626">
    <property type="term" value="P:plant-type hypersensitive response"/>
    <property type="evidence" value="ECO:0007669"/>
    <property type="project" value="UniProtKB-KW"/>
</dbReference>
<dbReference type="GO" id="GO:0009620">
    <property type="term" value="P:response to fungus"/>
    <property type="evidence" value="ECO:0000270"/>
    <property type="project" value="UniProtKB"/>
</dbReference>
<dbReference type="GO" id="GO:0009610">
    <property type="term" value="P:response to symbiotic fungus"/>
    <property type="evidence" value="ECO:0000270"/>
    <property type="project" value="UniProtKB"/>
</dbReference>
<dbReference type="InterPro" id="IPR008808">
    <property type="entry name" value="Powdery_mildew-R_dom"/>
</dbReference>
<dbReference type="Pfam" id="PF05659">
    <property type="entry name" value="RPW8"/>
    <property type="match status" value="1"/>
</dbReference>
<dbReference type="PROSITE" id="PS51153">
    <property type="entry name" value="RPW8"/>
    <property type="match status" value="1"/>
</dbReference>
<proteinExistence type="evidence at transcript level"/>
<reference key="1">
    <citation type="journal article" date="2001" name="Science">
        <title>Broad-spectrum mildew resistance in Arabidopsis thaliana mediated by RPW8.</title>
        <authorList>
            <person name="Xiao S."/>
            <person name="Ellwood S."/>
            <person name="Calis O."/>
            <person name="Patrick E."/>
            <person name="Li T."/>
            <person name="Coleman M."/>
            <person name="Turner J.G."/>
        </authorList>
    </citation>
    <scope>NUCLEOTIDE SEQUENCE [GENOMIC DNA]</scope>
    <scope>FUNCTION</scope>
    <scope>MISCELLANEOUS</scope>
    <scope>GENE FAMILY</scope>
    <scope>NOMENCLATURE</scope>
    <source>
        <strain>cv. Ms-0</strain>
    </source>
</reference>
<reference key="2">
    <citation type="journal article" date="2008" name="Mol. Ecol.">
        <title>Functional variation in a disease resistance gene in populations of Arabidopsis thaliana.</title>
        <authorList>
            <person name="Jorgensen T.H."/>
            <person name="Emerson B.C."/>
        </authorList>
    </citation>
    <scope>NUCLEOTIDE SEQUENCE [GENOMIC DNA]</scope>
    <scope>REVIEW ON GENETIC VARIATIONS</scope>
</reference>
<reference key="3">
    <citation type="journal article" date="2004" name="Mol. Biol. Evol.">
        <title>Origin and maintenance of a broad-spectrum disease resistance locus in Arabidopsis.</title>
        <authorList>
            <person name="Xiao S."/>
            <person name="Emerson B."/>
            <person name="Ratanasut K."/>
            <person name="Patrick E."/>
            <person name="O'Neill C."/>
            <person name="Bancroft I."/>
            <person name="Turner J.G."/>
        </authorList>
    </citation>
    <scope>FUNCTION</scope>
    <scope>MISCELLANEOUS</scope>
    <scope>CAUTION</scope>
    <scope>INDUCTION BY ERYSIPHE CICHORACEARUM</scope>
    <scope>GENE FAMILY</scope>
</reference>
<reference key="4">
    <citation type="journal article" date="2007" name="Genetics">
        <title>Intraspecific genetic variations, fitness cost and benefit of RPW8, a disease resistance locus in Arabidopsis thaliana.</title>
        <authorList>
            <person name="Orgil U."/>
            <person name="Araki H."/>
            <person name="Tangchaiburana S."/>
            <person name="Berkey R."/>
            <person name="Xiao S."/>
        </authorList>
    </citation>
    <scope>FUNCTION</scope>
</reference>
<reference key="5">
    <citation type="journal article" date="2012" name="Int. J. Mol. Sci.">
        <title>HR4 gene is induced in the Arabidopsis-trichoderma atroviride beneficial interaction.</title>
        <authorList>
            <person name="Saenz-Mata J."/>
            <person name="Jimenez-Bremont J.F."/>
        </authorList>
    </citation>
    <scope>INDUCTION BY BENEFICIAL MICROBES</scope>
    <source>
        <strain>cv. Ms-0</strain>
    </source>
</reference>
<organism evidence="12">
    <name type="scientific">Arabidopsis thaliana</name>
    <name type="common">Mouse-ear cress</name>
    <dbReference type="NCBI Taxonomy" id="3702"/>
    <lineage>
        <taxon>Eukaryota</taxon>
        <taxon>Viridiplantae</taxon>
        <taxon>Streptophyta</taxon>
        <taxon>Embryophyta</taxon>
        <taxon>Tracheophyta</taxon>
        <taxon>Spermatophyta</taxon>
        <taxon>Magnoliopsida</taxon>
        <taxon>eudicotyledons</taxon>
        <taxon>Gunneridae</taxon>
        <taxon>Pentapetalae</taxon>
        <taxon>rosids</taxon>
        <taxon>malvids</taxon>
        <taxon>Brassicales</taxon>
        <taxon>Brassicaceae</taxon>
        <taxon>Camelineae</taxon>
        <taxon>Arabidopsis</taxon>
    </lineage>
</organism>
<keyword id="KW-0175">Coiled coil</keyword>
<keyword id="KW-0381">Hypersensitive response</keyword>
<keyword id="KW-0472">Membrane</keyword>
<keyword id="KW-0611">Plant defense</keyword>
<keyword id="KW-0812">Transmembrane</keyword>
<keyword id="KW-1133">Transmembrane helix</keyword>
<name>RPW81_ARATH</name>
<gene>
    <name evidence="7" type="primary">RPW8.1</name>
</gene>
<protein>
    <recommendedName>
        <fullName evidence="7">Protein RESISTANCE TO POWDERY MILDEW 8.1</fullName>
        <shortName evidence="8">AtRPW8.1</shortName>
    </recommendedName>
</protein>
<comment type="function">
    <text evidence="3 4 5">Disease resistance (R) protein that induces localized, salicylic acid-dependent defenses (PubMed:11141561). Confers resistance to powdery mildew (e.g. Erysiphe cichoracearum UCSC1) (PubMed:11141561, PubMed:15155802, PubMed:17565954).</text>
</comment>
<comment type="subcellular location">
    <subcellularLocation>
        <location evidence="1">Membrane</location>
        <topology evidence="1">Single-pass membrane protein</topology>
    </subcellularLocation>
</comment>
<comment type="induction">
    <text evidence="4 6">Expressed in leaves after powdery mildew infection (e.g. Erysiphe cichoracearum UCSC1) (PubMed:15155802). Induced in seedlings by the beneficial symbiotic fungus Trichoderma atroviride (PubMed:22942755).</text>
</comment>
<comment type="miscellaneous">
    <text evidence="10 11">Ecotypes susceptible to Erysiphe cichoracearum, such as cv. Columbia, are lacking RPW8.1 and RPW8.2 but contain in place HR4.</text>
</comment>
<comment type="similarity">
    <text evidence="9">Belongs to the plant RPW8 protein family.</text>
</comment>
<comment type="caution">
    <text evidence="10">Not present in cv. Columbia. The sequence shown is from strain cv. Ms-0.</text>
</comment>